<comment type="function">
    <text evidence="5 6 7 8 9 10">Acts as a negative regulator of entry into mitosis (G2 to M transition) by phosphorylation of the CDK1 kinase during oocyte maturation (PubMed:16338136, PubMed:16421191, PubMed:16466390). Required for oocyte maturation, embryonic development, germline proliferation and initiation of meiosis during spermatogenesis (PubMed:11702779, PubMed:12397109, PubMed:27104746). Required for chromosome structure during mitosis and negative regulation of nuclear envelope breakdown (PubMed:16421191).</text>
</comment>
<comment type="catalytic activity">
    <reaction>
        <text>L-seryl-[protein] + ATP = O-phospho-L-seryl-[protein] + ADP + H(+)</text>
        <dbReference type="Rhea" id="RHEA:17989"/>
        <dbReference type="Rhea" id="RHEA-COMP:9863"/>
        <dbReference type="Rhea" id="RHEA-COMP:11604"/>
        <dbReference type="ChEBI" id="CHEBI:15378"/>
        <dbReference type="ChEBI" id="CHEBI:29999"/>
        <dbReference type="ChEBI" id="CHEBI:30616"/>
        <dbReference type="ChEBI" id="CHEBI:83421"/>
        <dbReference type="ChEBI" id="CHEBI:456216"/>
        <dbReference type="EC" id="2.7.11.1"/>
    </reaction>
</comment>
<comment type="catalytic activity">
    <reaction>
        <text>L-threonyl-[protein] + ATP = O-phospho-L-threonyl-[protein] + ADP + H(+)</text>
        <dbReference type="Rhea" id="RHEA:46608"/>
        <dbReference type="Rhea" id="RHEA-COMP:11060"/>
        <dbReference type="Rhea" id="RHEA-COMP:11605"/>
        <dbReference type="ChEBI" id="CHEBI:15378"/>
        <dbReference type="ChEBI" id="CHEBI:30013"/>
        <dbReference type="ChEBI" id="CHEBI:30616"/>
        <dbReference type="ChEBI" id="CHEBI:61977"/>
        <dbReference type="ChEBI" id="CHEBI:456216"/>
        <dbReference type="EC" id="2.7.11.1"/>
    </reaction>
</comment>
<comment type="subcellular location">
    <subcellularLocation>
        <location evidence="1">Golgi apparatus membrane</location>
        <topology evidence="1">Peripheral membrane protein</topology>
    </subcellularLocation>
    <subcellularLocation>
        <location evidence="9">Cytoplasm</location>
    </subcellularLocation>
</comment>
<comment type="developmental stage">
    <text evidence="6">Expressed during both germline and early embryonic development. In larvae, it is expressed in the distal region, germline, and in some neurons and hypodermal cells. Not expressed in distal region of the adult.</text>
</comment>
<comment type="disruption phenotype">
    <text evidence="5 8 10">Worms exhibit oocytes that mature prematurely (also known as the Emo phenotype) and chromosomes that appear condensed (PubMed:16421191). Subcellular defects include irregular perinuclear foci in oocytes (PubMed:16421191). RNAi-mediated knockdown results in an accumulation of damaged, compressed, polyploid oocytes in the uterus (PubMed:11702779). RNAi-mediated knockdown in a double oma-1 and oma-2 knockout background allows for the progression of meiosis beyond the prophase stage and oocyte maturation, but these oocytes cannot be fertilized (PubMed:11702779). RNAi-mediated knockdown in a cdc-25.2 mutant background suppresses the defect in intestinal cell divisions in the cdc-25.2 single mutant (PubMed:27104746).</text>
</comment>
<comment type="similarity">
    <text evidence="2">Belongs to the protein kinase superfamily. Ser/Thr protein kinase family. WEE1 subfamily.</text>
</comment>
<proteinExistence type="evidence at protein level"/>
<accession>O18209</accession>
<feature type="chain" id="PRO_0000086576" description="Membrane-associated tyrosine- and threonine-specific cdc2-inhibitory kinase wee-1.3">
    <location>
        <begin position="1"/>
        <end position="677"/>
    </location>
</feature>
<feature type="domain" description="Protein kinase" evidence="2">
    <location>
        <begin position="108"/>
        <end position="355"/>
    </location>
</feature>
<feature type="region of interest" description="Disordered" evidence="4">
    <location>
        <begin position="1"/>
        <end position="30"/>
    </location>
</feature>
<feature type="region of interest" description="Disordered" evidence="4">
    <location>
        <begin position="478"/>
        <end position="526"/>
    </location>
</feature>
<feature type="region of interest" description="Disordered" evidence="4">
    <location>
        <begin position="632"/>
        <end position="677"/>
    </location>
</feature>
<feature type="compositionally biased region" description="Polar residues" evidence="4">
    <location>
        <begin position="1"/>
        <end position="22"/>
    </location>
</feature>
<feature type="compositionally biased region" description="Polar residues" evidence="4">
    <location>
        <begin position="489"/>
        <end position="499"/>
    </location>
</feature>
<feature type="compositionally biased region" description="Basic and acidic residues" evidence="4">
    <location>
        <begin position="638"/>
        <end position="652"/>
    </location>
</feature>
<feature type="active site" description="Proton acceptor" evidence="2 3">
    <location>
        <position position="228"/>
    </location>
</feature>
<feature type="binding site" evidence="2">
    <location>
        <begin position="114"/>
        <end position="122"/>
    </location>
    <ligand>
        <name>ATP</name>
        <dbReference type="ChEBI" id="CHEBI:30616"/>
    </ligand>
</feature>
<feature type="binding site" evidence="2">
    <location>
        <position position="137"/>
    </location>
    <ligand>
        <name>ATP</name>
        <dbReference type="ChEBI" id="CHEBI:30616"/>
    </ligand>
</feature>
<feature type="binding site" evidence="1">
    <location>
        <position position="233"/>
    </location>
    <ligand>
        <name>Mg(2+)</name>
        <dbReference type="ChEBI" id="CHEBI:18420"/>
    </ligand>
</feature>
<feature type="binding site" evidence="1">
    <location>
        <position position="246"/>
    </location>
    <ligand>
        <name>Mg(2+)</name>
        <dbReference type="ChEBI" id="CHEBI:18420"/>
    </ligand>
</feature>
<feature type="mutagenesis site" description="In eb94; viable but induces male sterility due to abnormal sperm." evidence="6">
    <original>F</original>
    <variation>I</variation>
    <location>
        <position position="103"/>
    </location>
</feature>
<feature type="mutagenesis site" description="In eb62; viable but induces male sterility due to abnormal sperm." evidence="6">
    <original>I</original>
    <variation>N</variation>
    <location>
        <position position="160"/>
    </location>
</feature>
<feature type="mutagenesis site" description="In eb90; induces inviable embryos and larvae." evidence="6">
    <original>H</original>
    <variation>P</variation>
    <location>
        <position position="163"/>
    </location>
</feature>
<feature type="mutagenesis site" description="In eb88; induces inviable embryos and larvae." evidence="6">
    <original>G</original>
    <variation>E</variation>
    <location>
        <position position="245"/>
    </location>
</feature>
<feature type="mutagenesis site" description="In eb95; induces defects in spermatogenesis." evidence="6">
    <original>G</original>
    <variation>R</variation>
    <location>
        <position position="558"/>
    </location>
</feature>
<feature type="mutagenesis site" description="In hc144; induces defects in spermatogenesis." evidence="6">
    <original>G</original>
    <variation>E</variation>
    <location>
        <position position="560"/>
    </location>
</feature>
<feature type="mutagenesis site" description="In q89; dominant allele that induces an arrest of spermatogenesis at early stages." evidence="6">
    <original>G</original>
    <variation>R</variation>
    <location>
        <position position="560"/>
    </location>
</feature>
<feature type="mutagenesis site" description="In hc145; induces defects in spermatogenesis." evidence="6">
    <original>D</original>
    <variation>N</variation>
    <location>
        <position position="561"/>
    </location>
</feature>
<evidence type="ECO:0000250" key="1"/>
<evidence type="ECO:0000255" key="2">
    <source>
        <dbReference type="PROSITE-ProRule" id="PRU00159"/>
    </source>
</evidence>
<evidence type="ECO:0000255" key="3">
    <source>
        <dbReference type="PROSITE-ProRule" id="PRU10027"/>
    </source>
</evidence>
<evidence type="ECO:0000256" key="4">
    <source>
        <dbReference type="SAM" id="MobiDB-lite"/>
    </source>
</evidence>
<evidence type="ECO:0000269" key="5">
    <source>
    </source>
</evidence>
<evidence type="ECO:0000269" key="6">
    <source>
    </source>
</evidence>
<evidence type="ECO:0000269" key="7">
    <source>
    </source>
</evidence>
<evidence type="ECO:0000269" key="8">
    <source>
    </source>
</evidence>
<evidence type="ECO:0000269" key="9">
    <source>
    </source>
</evidence>
<evidence type="ECO:0000269" key="10">
    <source>
    </source>
</evidence>
<sequence length="677" mass="76967">MDDTEGNSSMDSIRNGQSSPLPQVTPRLPQIPMMMRETPLSTKRERQAITPRFRRPAPKMIKTMPPTRSIWSVRKESVPLLVTPQGPKPLESPKYDHTNAQSFFEQVFQIDEIIGRGSFGEVFAARCREDSQLYAVKVSLAPIRQHSISKYREAESHMIIPPHKNLVKFYRAWEETGRLYIQTELCDQSLLKYCTEKHALPEDEIWNIFVDLLQAVHHLHSNDMIHDDIKPENIFLTKDMICKLGDFGLVINLKNPNDVKSAEEGDSKYLAPEVLNGRPTKSSDIFSLGMTILEATTDLDVPSNGDSWHQIRNGQIPDRFFAGISTDLRSLIALMLDSDPRIRPTSRDLLDHPVIKKKLMKRGTYVKCISILNGFFYAFSAVLVWVMAFFSVLFHPIVRFHAAIKDRQSEICAQFVNNQQHTPIQTPETSKVYLESLTGVAVRQASQIVSPFDFSDDENPPNAQRRLFTGAVPCRLNFDNDQDDDEEQATCSSSNSSAIEPQLDEPESPPRMNDVIDKLGKRGTPRSARRNLTFNRHRQVAASVAPKSSLNHYNHHTGSGDGFSNNSLIPISDQERTEKYLRMRLTEQQLDWADQNNVIDEAPPPMSCPPRIRRSIRDLPRMPVLNFNVLDEPSNKPTVDHHTILEQSESPRRRLNRGAKPVPRNRMMSFGSSGDEV</sequence>
<name>PMY13_CAEEL</name>
<reference key="1">
    <citation type="journal article" date="1998" name="Science">
        <title>Genome sequence of the nematode C. elegans: a platform for investigating biology.</title>
        <authorList>
            <consortium name="The C. elegans sequencing consortium"/>
        </authorList>
    </citation>
    <scope>NUCLEOTIDE SEQUENCE [LARGE SCALE GENOMIC DNA]</scope>
    <source>
        <strain>Bristol N2</strain>
    </source>
</reference>
<reference key="2">
    <citation type="journal article" date="2001" name="Dev. Cell">
        <title>Two zinc finger proteins, OMA-1 and OMA-2, are redundantly required for oocyte maturation in C. elegans.</title>
        <authorList>
            <person name="Detwiler M.R."/>
            <person name="Reuben M."/>
            <person name="Li X."/>
            <person name="Rogers E."/>
            <person name="Lin R."/>
        </authorList>
    </citation>
    <scope>FUNCTION</scope>
    <scope>DISRUPTION PHENOTYPE</scope>
</reference>
<reference key="3">
    <citation type="journal article" date="2002" name="Development">
        <title>Dominant mutations in the Caenorhabditis elegans Myt1 ortholog wee-1.3 reveal a novel domain that controls M-phase entry during spermatogenesis.</title>
        <authorList>
            <person name="Lamitina S.T."/>
            <person name="L'Hernault S.W."/>
        </authorList>
    </citation>
    <scope>FUNCTION</scope>
    <scope>DEVELOPMENTAL STAGE</scope>
    <scope>MUTAGENESIS OF PHE-103; ILE-160; HIS-163; GLY-245; GLY-558; GLY-560 AND ASP-561</scope>
</reference>
<reference key="4">
    <citation type="journal article" date="2006" name="Curr. Biol.">
        <title>The C. elegans DYRK Kinase MBK-2 marks oocyte proteins for degradation in response to meiotic maturation.</title>
        <authorList>
            <person name="Stitzel M.L."/>
            <person name="Pellettieri J."/>
            <person name="Seydoux G."/>
        </authorList>
    </citation>
    <scope>FUNCTION</scope>
</reference>
<reference key="5">
    <citation type="journal article" date="2006" name="Development">
        <title>The C. elegans Myt1 ortholog is required for the proper timing of oocyte maturation.</title>
        <authorList>
            <person name="Burrows A.E."/>
            <person name="Sceurman B.K."/>
            <person name="Kosinski M.E."/>
            <person name="Richie C.T."/>
            <person name="Sadler P.L."/>
            <person name="Schumacher J.M."/>
            <person name="Golden A."/>
        </authorList>
    </citation>
    <scope>FUNCTION</scope>
    <scope>DISRUPTION PHENOTYPE</scope>
</reference>
<reference key="6">
    <citation type="journal article" date="2006" name="Dev. Growth Differ.">
        <title>Cell cycle control by daf-21/Hsp90 at the first meiotic prophase/metaphase boundary during oogenesis in Caenorhabditis elegans.</title>
        <authorList>
            <person name="Inoue T."/>
            <person name="Hirata K."/>
            <person name="Kuwana Y."/>
            <person name="Fujita M."/>
            <person name="Miwa J."/>
            <person name="Roy R."/>
            <person name="Yamaguchi Y."/>
        </authorList>
    </citation>
    <scope>FUNCTION</scope>
    <scope>SUBCELLULAR LOCATION</scope>
</reference>
<reference key="7">
    <citation type="journal article" date="2016" name="Cell Cycle">
        <title>CDC-25.2, a C. elegans ortholog of cdc25, is essential for the progression of intestinal divisions.</title>
        <authorList>
            <person name="Lee Y.U."/>
            <person name="Son M."/>
            <person name="Kim J."/>
            <person name="Shim Y.H."/>
            <person name="Kawasaki I."/>
        </authorList>
    </citation>
    <scope>FUNCTION</scope>
    <scope>DISRUPTION PHENOTYPE</scope>
</reference>
<keyword id="KW-0067">ATP-binding</keyword>
<keyword id="KW-0131">Cell cycle</keyword>
<keyword id="KW-0963">Cytoplasm</keyword>
<keyword id="KW-0217">Developmental protein</keyword>
<keyword id="KW-0221">Differentiation</keyword>
<keyword id="KW-0333">Golgi apparatus</keyword>
<keyword id="KW-0418">Kinase</keyword>
<keyword id="KW-0460">Magnesium</keyword>
<keyword id="KW-0472">Membrane</keyword>
<keyword id="KW-0479">Metal-binding</keyword>
<keyword id="KW-0547">Nucleotide-binding</keyword>
<keyword id="KW-0896">Oogenesis</keyword>
<keyword id="KW-1185">Reference proteome</keyword>
<keyword id="KW-0723">Serine/threonine-protein kinase</keyword>
<keyword id="KW-0744">Spermatogenesis</keyword>
<keyword id="KW-0808">Transferase</keyword>
<protein>
    <recommendedName>
        <fullName>Membrane-associated tyrosine- and threonine-specific cdc2-inhibitory kinase wee-1.3</fullName>
        <ecNumber>2.7.11.1</ecNumber>
    </recommendedName>
    <alternativeName>
        <fullName>Lethal protein 37</fullName>
    </alternativeName>
    <alternativeName>
        <fullName>Myt1 kinase</fullName>
    </alternativeName>
</protein>
<dbReference type="EC" id="2.7.11.1"/>
<dbReference type="EMBL" id="Z99277">
    <property type="protein sequence ID" value="CAB16484.1"/>
    <property type="molecule type" value="Genomic_DNA"/>
</dbReference>
<dbReference type="PIR" id="T27127">
    <property type="entry name" value="T27127"/>
</dbReference>
<dbReference type="RefSeq" id="NP_496095.1">
    <property type="nucleotide sequence ID" value="NM_063694.7"/>
</dbReference>
<dbReference type="SMR" id="O18209"/>
<dbReference type="BioGRID" id="39853">
    <property type="interactions" value="10"/>
</dbReference>
<dbReference type="DIP" id="DIP-24649N"/>
<dbReference type="FunCoup" id="O18209">
    <property type="interactions" value="195"/>
</dbReference>
<dbReference type="IntAct" id="O18209">
    <property type="interactions" value="1"/>
</dbReference>
<dbReference type="STRING" id="6239.Y53C12A.1.1"/>
<dbReference type="PaxDb" id="6239-Y53C12A.1"/>
<dbReference type="EnsemblMetazoa" id="Y53C12A.1.1">
    <property type="protein sequence ID" value="Y53C12A.1.1"/>
    <property type="gene ID" value="WBGene00006940"/>
</dbReference>
<dbReference type="GeneID" id="174531"/>
<dbReference type="KEGG" id="cel:CELE_Y53C12A.1"/>
<dbReference type="UCSC" id="Y53C12A.1">
    <property type="organism name" value="c. elegans"/>
</dbReference>
<dbReference type="AGR" id="WB:WBGene00006940"/>
<dbReference type="CTD" id="174531"/>
<dbReference type="WormBase" id="Y53C12A.1">
    <property type="protein sequence ID" value="CE14884"/>
    <property type="gene ID" value="WBGene00006940"/>
    <property type="gene designation" value="wee-1.3"/>
</dbReference>
<dbReference type="eggNOG" id="KOG0601">
    <property type="taxonomic scope" value="Eukaryota"/>
</dbReference>
<dbReference type="GeneTree" id="ENSGT00940000159427"/>
<dbReference type="HOGENOM" id="CLU_406103_0_0_1"/>
<dbReference type="InParanoid" id="O18209"/>
<dbReference type="OMA" id="ESHMIIP"/>
<dbReference type="OrthoDB" id="5337378at2759"/>
<dbReference type="PhylomeDB" id="O18209"/>
<dbReference type="Reactome" id="R-CEL-156711">
    <property type="pathway name" value="Polo-like kinase mediated events"/>
</dbReference>
<dbReference type="Reactome" id="R-CEL-69273">
    <property type="pathway name" value="Cyclin A/B1/B2 associated events during G2/M transition"/>
</dbReference>
<dbReference type="Reactome" id="R-CEL-69478">
    <property type="pathway name" value="G2/M DNA replication checkpoint"/>
</dbReference>
<dbReference type="PRO" id="PR:O18209"/>
<dbReference type="Proteomes" id="UP000001940">
    <property type="component" value="Chromosome II"/>
</dbReference>
<dbReference type="Bgee" id="WBGene00006940">
    <property type="expression patterns" value="Expressed in adult organism and 4 other cell types or tissues"/>
</dbReference>
<dbReference type="GO" id="GO:0000793">
    <property type="term" value="C:condensed chromosome"/>
    <property type="evidence" value="ECO:0000314"/>
    <property type="project" value="WormBase"/>
</dbReference>
<dbReference type="GO" id="GO:0005737">
    <property type="term" value="C:cytoplasm"/>
    <property type="evidence" value="ECO:0000314"/>
    <property type="project" value="UniProtKB"/>
</dbReference>
<dbReference type="GO" id="GO:0019898">
    <property type="term" value="C:extrinsic component of membrane"/>
    <property type="evidence" value="ECO:0000304"/>
    <property type="project" value="UniProtKB"/>
</dbReference>
<dbReference type="GO" id="GO:0000139">
    <property type="term" value="C:Golgi membrane"/>
    <property type="evidence" value="ECO:0007669"/>
    <property type="project" value="UniProtKB-SubCell"/>
</dbReference>
<dbReference type="GO" id="GO:0005635">
    <property type="term" value="C:nuclear envelope"/>
    <property type="evidence" value="ECO:0000314"/>
    <property type="project" value="WormBase"/>
</dbReference>
<dbReference type="GO" id="GO:0005634">
    <property type="term" value="C:nucleus"/>
    <property type="evidence" value="ECO:0000314"/>
    <property type="project" value="WormBase"/>
</dbReference>
<dbReference type="GO" id="GO:0097038">
    <property type="term" value="C:perinuclear endoplasmic reticulum"/>
    <property type="evidence" value="ECO:0000314"/>
    <property type="project" value="WormBase"/>
</dbReference>
<dbReference type="GO" id="GO:0005886">
    <property type="term" value="C:plasma membrane"/>
    <property type="evidence" value="ECO:0000314"/>
    <property type="project" value="WormBase"/>
</dbReference>
<dbReference type="GO" id="GO:0005524">
    <property type="term" value="F:ATP binding"/>
    <property type="evidence" value="ECO:0007669"/>
    <property type="project" value="UniProtKB-KW"/>
</dbReference>
<dbReference type="GO" id="GO:0004861">
    <property type="term" value="F:cyclin-dependent protein serine/threonine kinase inhibitor activity"/>
    <property type="evidence" value="ECO:0000316"/>
    <property type="project" value="WormBase"/>
</dbReference>
<dbReference type="GO" id="GO:0046872">
    <property type="term" value="F:metal ion binding"/>
    <property type="evidence" value="ECO:0007669"/>
    <property type="project" value="UniProtKB-KW"/>
</dbReference>
<dbReference type="GO" id="GO:0004672">
    <property type="term" value="F:protein kinase activity"/>
    <property type="evidence" value="ECO:0000318"/>
    <property type="project" value="GO_Central"/>
</dbReference>
<dbReference type="GO" id="GO:0106310">
    <property type="term" value="F:protein serine kinase activity"/>
    <property type="evidence" value="ECO:0007669"/>
    <property type="project" value="RHEA"/>
</dbReference>
<dbReference type="GO" id="GO:0004674">
    <property type="term" value="F:protein serine/threonine kinase activity"/>
    <property type="evidence" value="ECO:0000304"/>
    <property type="project" value="UniProtKB"/>
</dbReference>
<dbReference type="GO" id="GO:0009792">
    <property type="term" value="P:embryo development ending in birth or egg hatching"/>
    <property type="evidence" value="ECO:0000315"/>
    <property type="project" value="UniProtKB"/>
</dbReference>
<dbReference type="GO" id="GO:0051321">
    <property type="term" value="P:meiotic cell cycle"/>
    <property type="evidence" value="ECO:0000318"/>
    <property type="project" value="GO_Central"/>
</dbReference>
<dbReference type="GO" id="GO:0051078">
    <property type="term" value="P:meiotic nuclear membrane disassembly"/>
    <property type="evidence" value="ECO:0000315"/>
    <property type="project" value="UniProtKB"/>
</dbReference>
<dbReference type="GO" id="GO:0010972">
    <property type="term" value="P:negative regulation of G2/M transition of mitotic cell cycle"/>
    <property type="evidence" value="ECO:0000318"/>
    <property type="project" value="GO_Central"/>
</dbReference>
<dbReference type="GO" id="GO:0110031">
    <property type="term" value="P:negative regulation of G2/MI transition of meiotic cell cycle"/>
    <property type="evidence" value="ECO:0000318"/>
    <property type="project" value="GO_Central"/>
</dbReference>
<dbReference type="GO" id="GO:1904145">
    <property type="term" value="P:negative regulation of meiotic cell cycle process involved in oocyte maturation"/>
    <property type="evidence" value="ECO:0000315"/>
    <property type="project" value="UniProtKB"/>
</dbReference>
<dbReference type="GO" id="GO:0060280">
    <property type="term" value="P:negative regulation of ovulation"/>
    <property type="evidence" value="ECO:0000315"/>
    <property type="project" value="UniProtKB"/>
</dbReference>
<dbReference type="GO" id="GO:0002119">
    <property type="term" value="P:nematode larval development"/>
    <property type="evidence" value="ECO:0000315"/>
    <property type="project" value="UniProtKB"/>
</dbReference>
<dbReference type="GO" id="GO:0045138">
    <property type="term" value="P:nematode male tail tip morphogenesis"/>
    <property type="evidence" value="ECO:0000315"/>
    <property type="project" value="UniProtKB"/>
</dbReference>
<dbReference type="GO" id="GO:0001556">
    <property type="term" value="P:oocyte maturation"/>
    <property type="evidence" value="ECO:0000315"/>
    <property type="project" value="WormBase"/>
</dbReference>
<dbReference type="GO" id="GO:0048477">
    <property type="term" value="P:oogenesis"/>
    <property type="evidence" value="ECO:0000315"/>
    <property type="project" value="UniProtKB"/>
</dbReference>
<dbReference type="GO" id="GO:0007283">
    <property type="term" value="P:spermatogenesis"/>
    <property type="evidence" value="ECO:0007669"/>
    <property type="project" value="UniProtKB-KW"/>
</dbReference>
<dbReference type="CDD" id="cd14050">
    <property type="entry name" value="PKc_Myt1"/>
    <property type="match status" value="1"/>
</dbReference>
<dbReference type="FunFam" id="1.10.510.10:FF:000315">
    <property type="entry name" value="membrane-associated tyrosine- and threonine-specific cdc2-inhibitory kinase"/>
    <property type="match status" value="1"/>
</dbReference>
<dbReference type="Gene3D" id="3.30.200.20">
    <property type="entry name" value="Phosphorylase Kinase, domain 1"/>
    <property type="match status" value="1"/>
</dbReference>
<dbReference type="Gene3D" id="1.10.510.10">
    <property type="entry name" value="Transferase(Phosphotransferase) domain 1"/>
    <property type="match status" value="1"/>
</dbReference>
<dbReference type="InterPro" id="IPR050339">
    <property type="entry name" value="CC_SR_Kinase"/>
</dbReference>
<dbReference type="InterPro" id="IPR011009">
    <property type="entry name" value="Kinase-like_dom_sf"/>
</dbReference>
<dbReference type="InterPro" id="IPR000719">
    <property type="entry name" value="Prot_kinase_dom"/>
</dbReference>
<dbReference type="InterPro" id="IPR017441">
    <property type="entry name" value="Protein_kinase_ATP_BS"/>
</dbReference>
<dbReference type="InterPro" id="IPR008271">
    <property type="entry name" value="Ser/Thr_kinase_AS"/>
</dbReference>
<dbReference type="PANTHER" id="PTHR11042">
    <property type="entry name" value="EUKARYOTIC TRANSLATION INITIATION FACTOR 2-ALPHA KINASE EIF2-ALPHA KINASE -RELATED"/>
    <property type="match status" value="1"/>
</dbReference>
<dbReference type="PANTHER" id="PTHR11042:SF183">
    <property type="entry name" value="MEMBRANE-ASSOCIATED TYROSINE- AND THREONINE-SPECIFIC CDC2-INHIBITORY KINASE"/>
    <property type="match status" value="1"/>
</dbReference>
<dbReference type="Pfam" id="PF00069">
    <property type="entry name" value="Pkinase"/>
    <property type="match status" value="1"/>
</dbReference>
<dbReference type="SMART" id="SM00220">
    <property type="entry name" value="S_TKc"/>
    <property type="match status" value="1"/>
</dbReference>
<dbReference type="SUPFAM" id="SSF56112">
    <property type="entry name" value="Protein kinase-like (PK-like)"/>
    <property type="match status" value="1"/>
</dbReference>
<dbReference type="PROSITE" id="PS00107">
    <property type="entry name" value="PROTEIN_KINASE_ATP"/>
    <property type="match status" value="1"/>
</dbReference>
<dbReference type="PROSITE" id="PS50011">
    <property type="entry name" value="PROTEIN_KINASE_DOM"/>
    <property type="match status" value="1"/>
</dbReference>
<dbReference type="PROSITE" id="PS00108">
    <property type="entry name" value="PROTEIN_KINASE_ST"/>
    <property type="match status" value="1"/>
</dbReference>
<organism>
    <name type="scientific">Caenorhabditis elegans</name>
    <dbReference type="NCBI Taxonomy" id="6239"/>
    <lineage>
        <taxon>Eukaryota</taxon>
        <taxon>Metazoa</taxon>
        <taxon>Ecdysozoa</taxon>
        <taxon>Nematoda</taxon>
        <taxon>Chromadorea</taxon>
        <taxon>Rhabditida</taxon>
        <taxon>Rhabditina</taxon>
        <taxon>Rhabditomorpha</taxon>
        <taxon>Rhabditoidea</taxon>
        <taxon>Rhabditidae</taxon>
        <taxon>Peloderinae</taxon>
        <taxon>Caenorhabditis</taxon>
    </lineage>
</organism>
<gene>
    <name type="primary">wee-1.3</name>
    <name type="synonym">let-37</name>
    <name type="synonym">myt-1</name>
    <name type="synonym">spe-37</name>
    <name type="ORF">Y53C12A.1</name>
</gene>